<name>RECF_HELMI</name>
<dbReference type="EMBL" id="CP000930">
    <property type="protein sequence ID" value="ABZ83662.1"/>
    <property type="molecule type" value="Genomic_DNA"/>
</dbReference>
<dbReference type="RefSeq" id="WP_012282185.1">
    <property type="nucleotide sequence ID" value="NC_010337.2"/>
</dbReference>
<dbReference type="SMR" id="B0TAL0"/>
<dbReference type="STRING" id="498761.HM1_0903"/>
<dbReference type="KEGG" id="hmo:HM1_0903"/>
<dbReference type="eggNOG" id="COG1195">
    <property type="taxonomic scope" value="Bacteria"/>
</dbReference>
<dbReference type="HOGENOM" id="CLU_040267_0_1_9"/>
<dbReference type="OrthoDB" id="9803889at2"/>
<dbReference type="Proteomes" id="UP000008550">
    <property type="component" value="Chromosome"/>
</dbReference>
<dbReference type="GO" id="GO:0005737">
    <property type="term" value="C:cytoplasm"/>
    <property type="evidence" value="ECO:0007669"/>
    <property type="project" value="UniProtKB-SubCell"/>
</dbReference>
<dbReference type="GO" id="GO:0005524">
    <property type="term" value="F:ATP binding"/>
    <property type="evidence" value="ECO:0007669"/>
    <property type="project" value="UniProtKB-UniRule"/>
</dbReference>
<dbReference type="GO" id="GO:0003697">
    <property type="term" value="F:single-stranded DNA binding"/>
    <property type="evidence" value="ECO:0007669"/>
    <property type="project" value="UniProtKB-UniRule"/>
</dbReference>
<dbReference type="GO" id="GO:0006260">
    <property type="term" value="P:DNA replication"/>
    <property type="evidence" value="ECO:0007669"/>
    <property type="project" value="UniProtKB-UniRule"/>
</dbReference>
<dbReference type="GO" id="GO:0000731">
    <property type="term" value="P:DNA synthesis involved in DNA repair"/>
    <property type="evidence" value="ECO:0007669"/>
    <property type="project" value="TreeGrafter"/>
</dbReference>
<dbReference type="GO" id="GO:0006302">
    <property type="term" value="P:double-strand break repair"/>
    <property type="evidence" value="ECO:0007669"/>
    <property type="project" value="TreeGrafter"/>
</dbReference>
<dbReference type="GO" id="GO:0009432">
    <property type="term" value="P:SOS response"/>
    <property type="evidence" value="ECO:0007669"/>
    <property type="project" value="UniProtKB-UniRule"/>
</dbReference>
<dbReference type="CDD" id="cd03242">
    <property type="entry name" value="ABC_RecF"/>
    <property type="match status" value="1"/>
</dbReference>
<dbReference type="Gene3D" id="3.40.50.300">
    <property type="entry name" value="P-loop containing nucleotide triphosphate hydrolases"/>
    <property type="match status" value="1"/>
</dbReference>
<dbReference type="Gene3D" id="1.20.1050.90">
    <property type="entry name" value="RecF/RecN/SMC, N-terminal domain"/>
    <property type="match status" value="1"/>
</dbReference>
<dbReference type="HAMAP" id="MF_00365">
    <property type="entry name" value="RecF"/>
    <property type="match status" value="1"/>
</dbReference>
<dbReference type="InterPro" id="IPR001238">
    <property type="entry name" value="DNA-binding_RecF"/>
</dbReference>
<dbReference type="InterPro" id="IPR018078">
    <property type="entry name" value="DNA-binding_RecF_CS"/>
</dbReference>
<dbReference type="InterPro" id="IPR027417">
    <property type="entry name" value="P-loop_NTPase"/>
</dbReference>
<dbReference type="InterPro" id="IPR003395">
    <property type="entry name" value="RecF/RecN/SMC_N"/>
</dbReference>
<dbReference type="InterPro" id="IPR042174">
    <property type="entry name" value="RecF_2"/>
</dbReference>
<dbReference type="NCBIfam" id="TIGR00611">
    <property type="entry name" value="recf"/>
    <property type="match status" value="1"/>
</dbReference>
<dbReference type="PANTHER" id="PTHR32182">
    <property type="entry name" value="DNA REPLICATION AND REPAIR PROTEIN RECF"/>
    <property type="match status" value="1"/>
</dbReference>
<dbReference type="PANTHER" id="PTHR32182:SF0">
    <property type="entry name" value="DNA REPLICATION AND REPAIR PROTEIN RECF"/>
    <property type="match status" value="1"/>
</dbReference>
<dbReference type="Pfam" id="PF02463">
    <property type="entry name" value="SMC_N"/>
    <property type="match status" value="1"/>
</dbReference>
<dbReference type="SUPFAM" id="SSF52540">
    <property type="entry name" value="P-loop containing nucleoside triphosphate hydrolases"/>
    <property type="match status" value="1"/>
</dbReference>
<dbReference type="PROSITE" id="PS00617">
    <property type="entry name" value="RECF_1"/>
    <property type="match status" value="1"/>
</dbReference>
<dbReference type="PROSITE" id="PS00618">
    <property type="entry name" value="RECF_2"/>
    <property type="match status" value="1"/>
</dbReference>
<feature type="chain" id="PRO_1000121123" description="DNA replication and repair protein RecF">
    <location>
        <begin position="1"/>
        <end position="372"/>
    </location>
</feature>
<feature type="binding site" evidence="1">
    <location>
        <begin position="30"/>
        <end position="37"/>
    </location>
    <ligand>
        <name>ATP</name>
        <dbReference type="ChEBI" id="CHEBI:30616"/>
    </ligand>
</feature>
<gene>
    <name evidence="1" type="primary">recF</name>
    <name type="ordered locus">Helmi_10370</name>
    <name type="ORF">HM1_0903</name>
</gene>
<keyword id="KW-0067">ATP-binding</keyword>
<keyword id="KW-0963">Cytoplasm</keyword>
<keyword id="KW-0227">DNA damage</keyword>
<keyword id="KW-0234">DNA repair</keyword>
<keyword id="KW-0235">DNA replication</keyword>
<keyword id="KW-0238">DNA-binding</keyword>
<keyword id="KW-0547">Nucleotide-binding</keyword>
<keyword id="KW-1185">Reference proteome</keyword>
<keyword id="KW-0742">SOS response</keyword>
<reference key="1">
    <citation type="journal article" date="2008" name="J. Bacteriol.">
        <title>The genome of Heliobacterium modesticaldum, a phototrophic representative of the Firmicutes containing the simplest photosynthetic apparatus.</title>
        <authorList>
            <person name="Sattley W.M."/>
            <person name="Madigan M.T."/>
            <person name="Swingley W.D."/>
            <person name="Cheung P.C."/>
            <person name="Clocksin K.M."/>
            <person name="Conrad A.L."/>
            <person name="Dejesa L.C."/>
            <person name="Honchak B.M."/>
            <person name="Jung D.O."/>
            <person name="Karbach L.E."/>
            <person name="Kurdoglu A."/>
            <person name="Lahiri S."/>
            <person name="Mastrian S.D."/>
            <person name="Page L.E."/>
            <person name="Taylor H.L."/>
            <person name="Wang Z.T."/>
            <person name="Raymond J."/>
            <person name="Chen M."/>
            <person name="Blankenship R.E."/>
            <person name="Touchman J.W."/>
        </authorList>
    </citation>
    <scope>NUCLEOTIDE SEQUENCE [LARGE SCALE GENOMIC DNA]</scope>
    <source>
        <strain>ATCC 51547 / Ice1</strain>
    </source>
</reference>
<sequence>MQIQAIELAHFRNYRGLQVDFMPGVNIFVGANGQGKTNLLESIALLSGGGSHRDARDAEMVQWQEAYYRIKAMGTADGQPVVIELAFGGERRKLAKVNNRRLRRIADLSETMNTVVFSPEDLSLVKGSPAQRRRYLDRELSQASPAYGDVLSRYARVLTQRNSLLRRLREGSATAAELELWDDQLAPLAVETLARRLDGLARIAPYARQIYRGLSRDKEQIELTYRSSFPLPDDRSRWLEAYRKALQERRAEEIARQATLTGPHRDDLQLFLNGRDARIYGSQGQQRSIALSLKLAEIAFIHQIKKEYPIVLLDDVMSELDPDRRQQLLSELESKNIQVFITTTHLHAFSPEQLGRAGIYRIQAGQLSRSNE</sequence>
<proteinExistence type="inferred from homology"/>
<protein>
    <recommendedName>
        <fullName evidence="1">DNA replication and repair protein RecF</fullName>
    </recommendedName>
</protein>
<comment type="function">
    <text evidence="1">The RecF protein is involved in DNA metabolism; it is required for DNA replication and normal SOS inducibility. RecF binds preferentially to single-stranded, linear DNA. It also seems to bind ATP.</text>
</comment>
<comment type="subcellular location">
    <subcellularLocation>
        <location evidence="1">Cytoplasm</location>
    </subcellularLocation>
</comment>
<comment type="similarity">
    <text evidence="1">Belongs to the RecF family.</text>
</comment>
<organism>
    <name type="scientific">Heliobacterium modesticaldum (strain ATCC 51547 / Ice1)</name>
    <dbReference type="NCBI Taxonomy" id="498761"/>
    <lineage>
        <taxon>Bacteria</taxon>
        <taxon>Bacillati</taxon>
        <taxon>Bacillota</taxon>
        <taxon>Clostridia</taxon>
        <taxon>Eubacteriales</taxon>
        <taxon>Heliobacteriaceae</taxon>
        <taxon>Heliomicrobium</taxon>
    </lineage>
</organism>
<accession>B0TAL0</accession>
<evidence type="ECO:0000255" key="1">
    <source>
        <dbReference type="HAMAP-Rule" id="MF_00365"/>
    </source>
</evidence>